<accession>Q5HPD5</accession>
<dbReference type="EMBL" id="CP000029">
    <property type="protein sequence ID" value="AAW54317.1"/>
    <property type="molecule type" value="Genomic_DNA"/>
</dbReference>
<dbReference type="STRING" id="176279.SERP0977"/>
<dbReference type="KEGG" id="ser:SERP0977"/>
<dbReference type="eggNOG" id="COG1114">
    <property type="taxonomic scope" value="Bacteria"/>
</dbReference>
<dbReference type="HOGENOM" id="CLU_036807_0_1_9"/>
<dbReference type="Proteomes" id="UP000000531">
    <property type="component" value="Chromosome"/>
</dbReference>
<dbReference type="GO" id="GO:0005886">
    <property type="term" value="C:plasma membrane"/>
    <property type="evidence" value="ECO:0007669"/>
    <property type="project" value="UniProtKB-SubCell"/>
</dbReference>
<dbReference type="GO" id="GO:0015188">
    <property type="term" value="F:L-isoleucine transmembrane transporter activity"/>
    <property type="evidence" value="ECO:0007669"/>
    <property type="project" value="TreeGrafter"/>
</dbReference>
<dbReference type="GO" id="GO:0015190">
    <property type="term" value="F:L-leucine transmembrane transporter activity"/>
    <property type="evidence" value="ECO:0007669"/>
    <property type="project" value="TreeGrafter"/>
</dbReference>
<dbReference type="GO" id="GO:0005304">
    <property type="term" value="F:L-valine transmembrane transporter activity"/>
    <property type="evidence" value="ECO:0007669"/>
    <property type="project" value="TreeGrafter"/>
</dbReference>
<dbReference type="GO" id="GO:0015818">
    <property type="term" value="P:isoleucine transport"/>
    <property type="evidence" value="ECO:0007669"/>
    <property type="project" value="TreeGrafter"/>
</dbReference>
<dbReference type="GO" id="GO:0015820">
    <property type="term" value="P:L-leucine transport"/>
    <property type="evidence" value="ECO:0007669"/>
    <property type="project" value="TreeGrafter"/>
</dbReference>
<dbReference type="Gene3D" id="1.20.1740.10">
    <property type="entry name" value="Amino acid/polyamine transporter I"/>
    <property type="match status" value="1"/>
</dbReference>
<dbReference type="InterPro" id="IPR004685">
    <property type="entry name" value="Brnchd-chn_aa_trnsp_Livcs"/>
</dbReference>
<dbReference type="NCBIfam" id="TIGR00796">
    <property type="entry name" value="livcs"/>
    <property type="match status" value="1"/>
</dbReference>
<dbReference type="PANTHER" id="PTHR30588:SF7">
    <property type="entry name" value="BRANCHED-CHAIN AMINO ACID CARRIER PROTEIN SAOUHSC_01411-RELATED"/>
    <property type="match status" value="1"/>
</dbReference>
<dbReference type="PANTHER" id="PTHR30588">
    <property type="entry name" value="BRANCHED-CHAIN AMINO ACID TRANSPORT SYSTEM 2 CARRIER PROTEIN"/>
    <property type="match status" value="1"/>
</dbReference>
<dbReference type="Pfam" id="PF05525">
    <property type="entry name" value="Branch_AA_trans"/>
    <property type="match status" value="1"/>
</dbReference>
<evidence type="ECO:0000255" key="1"/>
<evidence type="ECO:0000305" key="2"/>
<keyword id="KW-0029">Amino-acid transport</keyword>
<keyword id="KW-1003">Cell membrane</keyword>
<keyword id="KW-0472">Membrane</keyword>
<keyword id="KW-1185">Reference proteome</keyword>
<keyword id="KW-0812">Transmembrane</keyword>
<keyword id="KW-1133">Transmembrane helix</keyword>
<keyword id="KW-0813">Transport</keyword>
<protein>
    <recommendedName>
        <fullName>Putative branched-chain amino acid carrier protein SERP0977</fullName>
    </recommendedName>
</protein>
<organism>
    <name type="scientific">Staphylococcus epidermidis (strain ATCC 35984 / DSM 28319 / BCRC 17069 / CCUG 31568 / BM 3577 / RP62A)</name>
    <dbReference type="NCBI Taxonomy" id="176279"/>
    <lineage>
        <taxon>Bacteria</taxon>
        <taxon>Bacillati</taxon>
        <taxon>Bacillota</taxon>
        <taxon>Bacilli</taxon>
        <taxon>Bacillales</taxon>
        <taxon>Staphylococcaceae</taxon>
        <taxon>Staphylococcus</taxon>
    </lineage>
</organism>
<name>BRNQL_STAEQ</name>
<gene>
    <name type="ordered locus">SERP0977</name>
</gene>
<sequence length="447" mass="49071">MNKNTWIIGFTLFAMFFGAGNLIFPTQLGLESGHFFWPAILAFALTGIGLPLLGVVVGALDKHGYIGSFNKISPRFSLIFLIIIYLTIGPLFAIPRTASTSFEMTVTPIAHNSGNLALFIFTVIYFLIVLYLCLNPNKMIDRIGSLLTPLLLITIVAMIIKGFVDFGGHSSNYGMTNAYHSNLSGFSQGFTQGYLTMDAIASIAFSMIVVNAIKTTGIQHADKIFKQTIIAGLIAAIALVFIYISLGYIGNHINIPSDTLKELKAKDQNIGTYLLTTMATKGFGTFGKYLLGIIVSLACLTTACGLIVSVSEYFHRIIPKIPYKVFVVFFILVSFILANQGLNSVIKMSVPVLSVIYPVAITVILLILIARFIPTKRIAQQIPLIIVAIESILSLITTQGWIRISLIDSLPLKEYSLEWFPIAVVATLVGYMISYFVKQSNIVYQKE</sequence>
<reference key="1">
    <citation type="journal article" date="2005" name="J. Bacteriol.">
        <title>Insights on evolution of virulence and resistance from the complete genome analysis of an early methicillin-resistant Staphylococcus aureus strain and a biofilm-producing methicillin-resistant Staphylococcus epidermidis strain.</title>
        <authorList>
            <person name="Gill S.R."/>
            <person name="Fouts D.E."/>
            <person name="Archer G.L."/>
            <person name="Mongodin E.F."/>
            <person name="DeBoy R.T."/>
            <person name="Ravel J."/>
            <person name="Paulsen I.T."/>
            <person name="Kolonay J.F."/>
            <person name="Brinkac L.M."/>
            <person name="Beanan M.J."/>
            <person name="Dodson R.J."/>
            <person name="Daugherty S.C."/>
            <person name="Madupu R."/>
            <person name="Angiuoli S.V."/>
            <person name="Durkin A.S."/>
            <person name="Haft D.H."/>
            <person name="Vamathevan J.J."/>
            <person name="Khouri H."/>
            <person name="Utterback T.R."/>
            <person name="Lee C."/>
            <person name="Dimitrov G."/>
            <person name="Jiang L."/>
            <person name="Qin H."/>
            <person name="Weidman J."/>
            <person name="Tran K."/>
            <person name="Kang K.H."/>
            <person name="Hance I.R."/>
            <person name="Nelson K.E."/>
            <person name="Fraser C.M."/>
        </authorList>
    </citation>
    <scope>NUCLEOTIDE SEQUENCE [LARGE SCALE GENOMIC DNA]</scope>
    <source>
        <strain>ATCC 35984 / DSM 28319 / BCRC 17069 / CCUG 31568 / BM 3577 / RP62A</strain>
    </source>
</reference>
<proteinExistence type="inferred from homology"/>
<comment type="function">
    <text evidence="2">Component of the transport system for branched-chain amino acids (leucine, isoleucine and valine), which is coupled to a proton motive force.</text>
</comment>
<comment type="subcellular location">
    <subcellularLocation>
        <location evidence="2">Cell membrane</location>
        <topology evidence="2">Multi-pass membrane protein</topology>
    </subcellularLocation>
</comment>
<comment type="similarity">
    <text evidence="2">Belongs to the branched chain amino acid transporter family.</text>
</comment>
<feature type="chain" id="PRO_0000294021" description="Putative branched-chain amino acid carrier protein SERP0977">
    <location>
        <begin position="1"/>
        <end position="447"/>
    </location>
</feature>
<feature type="transmembrane region" description="Helical" evidence="1">
    <location>
        <begin position="5"/>
        <end position="25"/>
    </location>
</feature>
<feature type="transmembrane region" description="Helical" evidence="1">
    <location>
        <begin position="40"/>
        <end position="60"/>
    </location>
</feature>
<feature type="transmembrane region" description="Helical" evidence="1">
    <location>
        <begin position="74"/>
        <end position="94"/>
    </location>
</feature>
<feature type="transmembrane region" description="Helical" evidence="1">
    <location>
        <begin position="114"/>
        <end position="134"/>
    </location>
</feature>
<feature type="transmembrane region" description="Helical" evidence="1">
    <location>
        <begin position="143"/>
        <end position="163"/>
    </location>
</feature>
<feature type="transmembrane region" description="Helical" evidence="1">
    <location>
        <begin position="193"/>
        <end position="213"/>
    </location>
</feature>
<feature type="transmembrane region" description="Helical" evidence="1">
    <location>
        <begin position="229"/>
        <end position="249"/>
    </location>
</feature>
<feature type="transmembrane region" description="Helical" evidence="1">
    <location>
        <begin position="290"/>
        <end position="310"/>
    </location>
</feature>
<feature type="transmembrane region" description="Helical" evidence="1">
    <location>
        <begin position="317"/>
        <end position="337"/>
    </location>
</feature>
<feature type="transmembrane region" description="Helical" evidence="1">
    <location>
        <begin position="350"/>
        <end position="370"/>
    </location>
</feature>
<feature type="transmembrane region" description="Helical" evidence="1">
    <location>
        <begin position="382"/>
        <end position="402"/>
    </location>
</feature>
<feature type="transmembrane region" description="Helical" evidence="1">
    <location>
        <begin position="417"/>
        <end position="437"/>
    </location>
</feature>